<keyword id="KW-0963">Cytoplasm</keyword>
<keyword id="KW-0274">FAD</keyword>
<keyword id="KW-0285">Flavoprotein</keyword>
<keyword id="KW-0489">Methyltransferase</keyword>
<keyword id="KW-0511">Multifunctional enzyme</keyword>
<keyword id="KW-0560">Oxidoreductase</keyword>
<keyword id="KW-1185">Reference proteome</keyword>
<keyword id="KW-0949">S-adenosyl-L-methionine</keyword>
<keyword id="KW-0808">Transferase</keyword>
<keyword id="KW-0819">tRNA processing</keyword>
<sequence length="667" mass="75805">MHKLTFAQLSFNSDNTPVSEQFDDIYFSTEDGVQESYYVFQDGNQLWQKWQNHHRSAFVIAETGFGTGLNFLAVAEKFQQFRSTFPDSPLKRLYFISFEKYPLTQQQLADIHQHYPQFTQLSATLIACWQPRQAGCQRYHFDDVYLDIWFGEMLENLPQLGDLYNATVDSWFLDGFSPDKNPTMWHEQLYQHMFRLTRVGGSFATFTAASHVRCGLQAVGFTVYKRKGFAKKREMLCGEKAQKSQTAEVNFPYFYSPPAIVNDDIAIVGGGIASLFVALSLLERGKQVTLYCQDSQVAQKASGNAQGAIYPQLSDDDPRNVRFYVHCFDYALQRLKQFEKLVPFEHALTGVVLSAYNEKTAQKLQKIARQTQNQDLFKWCQAEELTEYLGVAIANEGAFIPQAGWLSPVQFVQQAFAYLQTKGLKIVLNHTVTDPQFVEGKWQWQYQGVQFAHHILVLANGHSFTQFSQAEGIPLYPVRGQVSQIPTTPALQKLKCVICYDGYLTPMATNGYHCIGASHVRDNTDMAFSAIEHQQNLAKLQQNIGAYHWTQGIDLSANLAKQGIRSALRDRVPMVGPIPHFAVQKQQYSNIYNLLRRKKAVENAVNFPHLYMVNGLASRGLTTAPLLGEMLASLIVNEPIPISQDIWHALLPNRTWLRKWLKGSKVV</sequence>
<organism>
    <name type="scientific">Haemophilus ducreyi (strain 35000HP / ATCC 700724)</name>
    <dbReference type="NCBI Taxonomy" id="233412"/>
    <lineage>
        <taxon>Bacteria</taxon>
        <taxon>Pseudomonadati</taxon>
        <taxon>Pseudomonadota</taxon>
        <taxon>Gammaproteobacteria</taxon>
        <taxon>Pasteurellales</taxon>
        <taxon>Pasteurellaceae</taxon>
        <taxon>Haemophilus</taxon>
    </lineage>
</organism>
<protein>
    <recommendedName>
        <fullName evidence="1">tRNA 5-methylaminomethyl-2-thiouridine biosynthesis bifunctional protein MnmC</fullName>
        <shortName evidence="1">tRNA mnm(5)s(2)U biosynthesis bifunctional protein</shortName>
    </recommendedName>
    <domain>
        <recommendedName>
            <fullName evidence="1">tRNA (mnm(5)s(2)U34)-methyltransferase</fullName>
            <ecNumber evidence="1">2.1.1.61</ecNumber>
        </recommendedName>
    </domain>
    <domain>
        <recommendedName>
            <fullName evidence="1">FAD-dependent cmnm(5)s(2)U34 oxidoreductase</fullName>
            <ecNumber evidence="1">1.5.-.-</ecNumber>
        </recommendedName>
    </domain>
</protein>
<dbReference type="EC" id="2.1.1.61" evidence="1"/>
<dbReference type="EC" id="1.5.-.-" evidence="1"/>
<dbReference type="EMBL" id="AE017143">
    <property type="protein sequence ID" value="AAP96002.1"/>
    <property type="molecule type" value="Genomic_DNA"/>
</dbReference>
<dbReference type="RefSeq" id="WP_010945051.1">
    <property type="nucleotide sequence ID" value="NC_002940.2"/>
</dbReference>
<dbReference type="SMR" id="Q7VM59"/>
<dbReference type="STRING" id="233412.HD_1141"/>
<dbReference type="KEGG" id="hdu:HD_1141"/>
<dbReference type="eggNOG" id="COG0665">
    <property type="taxonomic scope" value="Bacteria"/>
</dbReference>
<dbReference type="eggNOG" id="COG4121">
    <property type="taxonomic scope" value="Bacteria"/>
</dbReference>
<dbReference type="HOGENOM" id="CLU_022427_2_1_6"/>
<dbReference type="OrthoDB" id="9786494at2"/>
<dbReference type="Proteomes" id="UP000001022">
    <property type="component" value="Chromosome"/>
</dbReference>
<dbReference type="GO" id="GO:0005737">
    <property type="term" value="C:cytoplasm"/>
    <property type="evidence" value="ECO:0007669"/>
    <property type="project" value="UniProtKB-SubCell"/>
</dbReference>
<dbReference type="GO" id="GO:0050660">
    <property type="term" value="F:flavin adenine dinucleotide binding"/>
    <property type="evidence" value="ECO:0007669"/>
    <property type="project" value="UniProtKB-UniRule"/>
</dbReference>
<dbReference type="GO" id="GO:0016645">
    <property type="term" value="F:oxidoreductase activity, acting on the CH-NH group of donors"/>
    <property type="evidence" value="ECO:0007669"/>
    <property type="project" value="InterPro"/>
</dbReference>
<dbReference type="GO" id="GO:0004808">
    <property type="term" value="F:tRNA (5-methylaminomethyl-2-thiouridylate)(34)-methyltransferase activity"/>
    <property type="evidence" value="ECO:0007669"/>
    <property type="project" value="UniProtKB-EC"/>
</dbReference>
<dbReference type="GO" id="GO:0032259">
    <property type="term" value="P:methylation"/>
    <property type="evidence" value="ECO:0007669"/>
    <property type="project" value="UniProtKB-KW"/>
</dbReference>
<dbReference type="GO" id="GO:0002098">
    <property type="term" value="P:tRNA wobble uridine modification"/>
    <property type="evidence" value="ECO:0007669"/>
    <property type="project" value="TreeGrafter"/>
</dbReference>
<dbReference type="Gene3D" id="3.30.9.10">
    <property type="entry name" value="D-Amino Acid Oxidase, subunit A, domain 2"/>
    <property type="match status" value="1"/>
</dbReference>
<dbReference type="Gene3D" id="3.50.50.60">
    <property type="entry name" value="FAD/NAD(P)-binding domain"/>
    <property type="match status" value="1"/>
</dbReference>
<dbReference type="Gene3D" id="3.40.50.150">
    <property type="entry name" value="Vaccinia Virus protein VP39"/>
    <property type="match status" value="1"/>
</dbReference>
<dbReference type="HAMAP" id="MF_01102">
    <property type="entry name" value="MnmC"/>
    <property type="match status" value="1"/>
</dbReference>
<dbReference type="InterPro" id="IPR006076">
    <property type="entry name" value="FAD-dep_OxRdtase"/>
</dbReference>
<dbReference type="InterPro" id="IPR036188">
    <property type="entry name" value="FAD/NAD-bd_sf"/>
</dbReference>
<dbReference type="InterPro" id="IPR008471">
    <property type="entry name" value="MnmC-like_methylTransf"/>
</dbReference>
<dbReference type="InterPro" id="IPR029063">
    <property type="entry name" value="SAM-dependent_MTases_sf"/>
</dbReference>
<dbReference type="InterPro" id="IPR023032">
    <property type="entry name" value="tRNA_MAMT_biosynth_bifunc_MnmC"/>
</dbReference>
<dbReference type="InterPro" id="IPR047785">
    <property type="entry name" value="tRNA_MNMC2"/>
</dbReference>
<dbReference type="InterPro" id="IPR017610">
    <property type="entry name" value="tRNA_S-uridine_synth_MnmC_C"/>
</dbReference>
<dbReference type="NCBIfam" id="TIGR03197">
    <property type="entry name" value="MnmC_Cterm"/>
    <property type="match status" value="1"/>
</dbReference>
<dbReference type="NCBIfam" id="NF002481">
    <property type="entry name" value="PRK01747.1-2"/>
    <property type="match status" value="1"/>
</dbReference>
<dbReference type="NCBIfam" id="NF002484">
    <property type="entry name" value="PRK01747.1-5"/>
    <property type="match status" value="1"/>
</dbReference>
<dbReference type="NCBIfam" id="NF033855">
    <property type="entry name" value="tRNA_MNMC2"/>
    <property type="match status" value="1"/>
</dbReference>
<dbReference type="PANTHER" id="PTHR13847">
    <property type="entry name" value="SARCOSINE DEHYDROGENASE-RELATED"/>
    <property type="match status" value="1"/>
</dbReference>
<dbReference type="PANTHER" id="PTHR13847:SF283">
    <property type="entry name" value="TRNA 5-METHYLAMINOMETHYL-2-THIOURIDINE BIOSYNTHESIS BIFUNCTIONAL PROTEIN MNMC"/>
    <property type="match status" value="1"/>
</dbReference>
<dbReference type="Pfam" id="PF01266">
    <property type="entry name" value="DAO"/>
    <property type="match status" value="1"/>
</dbReference>
<dbReference type="Pfam" id="PF05430">
    <property type="entry name" value="Methyltransf_30"/>
    <property type="match status" value="1"/>
</dbReference>
<dbReference type="SUPFAM" id="SSF51905">
    <property type="entry name" value="FAD/NAD(P)-binding domain"/>
    <property type="match status" value="1"/>
</dbReference>
<comment type="function">
    <text evidence="1">Catalyzes the last two steps in the biosynthesis of 5-methylaminomethyl-2-thiouridine (mnm(5)s(2)U) at the wobble position (U34) in tRNA. Catalyzes the FAD-dependent demodification of cmnm(5)s(2)U34 to nm(5)s(2)U34, followed by the transfer of a methyl group from S-adenosyl-L-methionine to nm(5)s(2)U34, to form mnm(5)s(2)U34.</text>
</comment>
<comment type="catalytic activity">
    <reaction evidence="1">
        <text>5-aminomethyl-2-thiouridine(34) in tRNA + S-adenosyl-L-methionine = 5-methylaminomethyl-2-thiouridine(34) in tRNA + S-adenosyl-L-homocysteine + H(+)</text>
        <dbReference type="Rhea" id="RHEA:19569"/>
        <dbReference type="Rhea" id="RHEA-COMP:10195"/>
        <dbReference type="Rhea" id="RHEA-COMP:10197"/>
        <dbReference type="ChEBI" id="CHEBI:15378"/>
        <dbReference type="ChEBI" id="CHEBI:57856"/>
        <dbReference type="ChEBI" id="CHEBI:59789"/>
        <dbReference type="ChEBI" id="CHEBI:74454"/>
        <dbReference type="ChEBI" id="CHEBI:74455"/>
        <dbReference type="EC" id="2.1.1.61"/>
    </reaction>
</comment>
<comment type="cofactor">
    <cofactor evidence="1">
        <name>FAD</name>
        <dbReference type="ChEBI" id="CHEBI:57692"/>
    </cofactor>
</comment>
<comment type="subcellular location">
    <subcellularLocation>
        <location evidence="1">Cytoplasm</location>
    </subcellularLocation>
</comment>
<comment type="similarity">
    <text evidence="1">In the N-terminal section; belongs to the methyltransferase superfamily. tRNA (mnm(5)s(2)U34)-methyltransferase family.</text>
</comment>
<comment type="similarity">
    <text evidence="1">In the C-terminal section; belongs to the DAO family.</text>
</comment>
<feature type="chain" id="PRO_0000095016" description="tRNA 5-methylaminomethyl-2-thiouridine biosynthesis bifunctional protein MnmC">
    <location>
        <begin position="1"/>
        <end position="667"/>
    </location>
</feature>
<feature type="region of interest" description="tRNA (mnm(5)s(2)U34)-methyltransferase">
    <location>
        <begin position="1"/>
        <end position="241"/>
    </location>
</feature>
<feature type="region of interest" description="FAD-dependent cmnm(5)s(2)U34 oxidoreductase">
    <location>
        <begin position="268"/>
        <end position="667"/>
    </location>
</feature>
<name>MNMC_HAEDU</name>
<reference key="1">
    <citation type="submission" date="2003-06" db="EMBL/GenBank/DDBJ databases">
        <title>The complete genome sequence of Haemophilus ducreyi.</title>
        <authorList>
            <person name="Munson R.S. Jr."/>
            <person name="Ray W.C."/>
            <person name="Mahairas G."/>
            <person name="Sabo P."/>
            <person name="Mungur R."/>
            <person name="Johnson L."/>
            <person name="Nguyen D."/>
            <person name="Wang J."/>
            <person name="Forst C."/>
            <person name="Hood L."/>
        </authorList>
    </citation>
    <scope>NUCLEOTIDE SEQUENCE [LARGE SCALE GENOMIC DNA]</scope>
    <source>
        <strain>35000HP / ATCC 700724</strain>
    </source>
</reference>
<evidence type="ECO:0000255" key="1">
    <source>
        <dbReference type="HAMAP-Rule" id="MF_01102"/>
    </source>
</evidence>
<gene>
    <name evidence="1" type="primary">mnmC</name>
    <name type="ordered locus">HD_1141</name>
</gene>
<proteinExistence type="inferred from homology"/>
<accession>Q7VM59</accession>